<comment type="function">
    <text evidence="1">Catalyzes the formation of S-adenosylmethionine (AdoMet) from methionine and ATP. The overall synthetic reaction is composed of two sequential steps, AdoMet formation and the subsequent tripolyphosphate hydrolysis which occurs prior to release of AdoMet from the enzyme.</text>
</comment>
<comment type="catalytic activity">
    <reaction evidence="1">
        <text>L-methionine + ATP + H2O = S-adenosyl-L-methionine + phosphate + diphosphate</text>
        <dbReference type="Rhea" id="RHEA:21080"/>
        <dbReference type="ChEBI" id="CHEBI:15377"/>
        <dbReference type="ChEBI" id="CHEBI:30616"/>
        <dbReference type="ChEBI" id="CHEBI:33019"/>
        <dbReference type="ChEBI" id="CHEBI:43474"/>
        <dbReference type="ChEBI" id="CHEBI:57844"/>
        <dbReference type="ChEBI" id="CHEBI:59789"/>
        <dbReference type="EC" id="2.5.1.6"/>
    </reaction>
</comment>
<comment type="cofactor">
    <cofactor evidence="1">
        <name>Mg(2+)</name>
        <dbReference type="ChEBI" id="CHEBI:18420"/>
    </cofactor>
    <text evidence="1">Binds 2 divalent ions per subunit.</text>
</comment>
<comment type="cofactor">
    <cofactor evidence="1">
        <name>K(+)</name>
        <dbReference type="ChEBI" id="CHEBI:29103"/>
    </cofactor>
    <text evidence="1">Binds 1 potassium ion per subunit.</text>
</comment>
<comment type="pathway">
    <text evidence="1">Amino-acid biosynthesis; S-adenosyl-L-methionine biosynthesis; S-adenosyl-L-methionine from L-methionine: step 1/1.</text>
</comment>
<comment type="subunit">
    <text evidence="1">Homotetramer; dimer of dimers.</text>
</comment>
<comment type="subcellular location">
    <subcellularLocation>
        <location evidence="1">Cytoplasm</location>
    </subcellularLocation>
</comment>
<comment type="similarity">
    <text evidence="1">Belongs to the AdoMet synthase family.</text>
</comment>
<gene>
    <name evidence="1" type="primary">metK</name>
    <name type="ordered locus">SPA2953</name>
</gene>
<dbReference type="EC" id="2.5.1.6" evidence="1"/>
<dbReference type="EMBL" id="CP000026">
    <property type="protein sequence ID" value="AAV78791.1"/>
    <property type="molecule type" value="Genomic_DNA"/>
</dbReference>
<dbReference type="RefSeq" id="WP_001062140.1">
    <property type="nucleotide sequence ID" value="NC_006511.1"/>
</dbReference>
<dbReference type="SMR" id="Q5PJJ2"/>
<dbReference type="KEGG" id="spt:SPA2953"/>
<dbReference type="HOGENOM" id="CLU_041802_1_1_6"/>
<dbReference type="UniPathway" id="UPA00315">
    <property type="reaction ID" value="UER00080"/>
</dbReference>
<dbReference type="Proteomes" id="UP000008185">
    <property type="component" value="Chromosome"/>
</dbReference>
<dbReference type="GO" id="GO:0005737">
    <property type="term" value="C:cytoplasm"/>
    <property type="evidence" value="ECO:0007669"/>
    <property type="project" value="UniProtKB-SubCell"/>
</dbReference>
<dbReference type="GO" id="GO:0005524">
    <property type="term" value="F:ATP binding"/>
    <property type="evidence" value="ECO:0007669"/>
    <property type="project" value="UniProtKB-UniRule"/>
</dbReference>
<dbReference type="GO" id="GO:0000287">
    <property type="term" value="F:magnesium ion binding"/>
    <property type="evidence" value="ECO:0007669"/>
    <property type="project" value="UniProtKB-UniRule"/>
</dbReference>
<dbReference type="GO" id="GO:0004478">
    <property type="term" value="F:methionine adenosyltransferase activity"/>
    <property type="evidence" value="ECO:0007669"/>
    <property type="project" value="UniProtKB-UniRule"/>
</dbReference>
<dbReference type="GO" id="GO:0006730">
    <property type="term" value="P:one-carbon metabolic process"/>
    <property type="evidence" value="ECO:0007669"/>
    <property type="project" value="UniProtKB-KW"/>
</dbReference>
<dbReference type="GO" id="GO:0006556">
    <property type="term" value="P:S-adenosylmethionine biosynthetic process"/>
    <property type="evidence" value="ECO:0007669"/>
    <property type="project" value="UniProtKB-UniRule"/>
</dbReference>
<dbReference type="CDD" id="cd18079">
    <property type="entry name" value="S-AdoMet_synt"/>
    <property type="match status" value="1"/>
</dbReference>
<dbReference type="FunFam" id="3.30.300.10:FF:000001">
    <property type="entry name" value="S-adenosylmethionine synthase"/>
    <property type="match status" value="1"/>
</dbReference>
<dbReference type="FunFam" id="3.30.300.10:FF:000003">
    <property type="entry name" value="S-adenosylmethionine synthase"/>
    <property type="match status" value="1"/>
</dbReference>
<dbReference type="Gene3D" id="3.30.300.10">
    <property type="match status" value="3"/>
</dbReference>
<dbReference type="HAMAP" id="MF_00086">
    <property type="entry name" value="S_AdoMet_synth1"/>
    <property type="match status" value="1"/>
</dbReference>
<dbReference type="InterPro" id="IPR022631">
    <property type="entry name" value="ADOMET_SYNTHASE_CS"/>
</dbReference>
<dbReference type="InterPro" id="IPR022630">
    <property type="entry name" value="S-AdoMet_synt_C"/>
</dbReference>
<dbReference type="InterPro" id="IPR022629">
    <property type="entry name" value="S-AdoMet_synt_central"/>
</dbReference>
<dbReference type="InterPro" id="IPR022628">
    <property type="entry name" value="S-AdoMet_synt_N"/>
</dbReference>
<dbReference type="InterPro" id="IPR002133">
    <property type="entry name" value="S-AdoMet_synthetase"/>
</dbReference>
<dbReference type="InterPro" id="IPR022636">
    <property type="entry name" value="S-AdoMet_synthetase_sfam"/>
</dbReference>
<dbReference type="NCBIfam" id="TIGR01034">
    <property type="entry name" value="metK"/>
    <property type="match status" value="1"/>
</dbReference>
<dbReference type="PANTHER" id="PTHR11964">
    <property type="entry name" value="S-ADENOSYLMETHIONINE SYNTHETASE"/>
    <property type="match status" value="1"/>
</dbReference>
<dbReference type="Pfam" id="PF02773">
    <property type="entry name" value="S-AdoMet_synt_C"/>
    <property type="match status" value="1"/>
</dbReference>
<dbReference type="Pfam" id="PF02772">
    <property type="entry name" value="S-AdoMet_synt_M"/>
    <property type="match status" value="1"/>
</dbReference>
<dbReference type="Pfam" id="PF00438">
    <property type="entry name" value="S-AdoMet_synt_N"/>
    <property type="match status" value="1"/>
</dbReference>
<dbReference type="PIRSF" id="PIRSF000497">
    <property type="entry name" value="MAT"/>
    <property type="match status" value="1"/>
</dbReference>
<dbReference type="SUPFAM" id="SSF55973">
    <property type="entry name" value="S-adenosylmethionine synthetase"/>
    <property type="match status" value="3"/>
</dbReference>
<dbReference type="PROSITE" id="PS00376">
    <property type="entry name" value="ADOMET_SYNTHASE_1"/>
    <property type="match status" value="1"/>
</dbReference>
<dbReference type="PROSITE" id="PS00377">
    <property type="entry name" value="ADOMET_SYNTHASE_2"/>
    <property type="match status" value="1"/>
</dbReference>
<protein>
    <recommendedName>
        <fullName evidence="1">S-adenosylmethionine synthase</fullName>
        <shortName evidence="1">AdoMet synthase</shortName>
        <ecNumber evidence="1">2.5.1.6</ecNumber>
    </recommendedName>
    <alternativeName>
        <fullName evidence="1">MAT</fullName>
    </alternativeName>
    <alternativeName>
        <fullName evidence="1">Methionine adenosyltransferase</fullName>
    </alternativeName>
</protein>
<name>METK_SALPA</name>
<proteinExistence type="inferred from homology"/>
<organism>
    <name type="scientific">Salmonella paratyphi A (strain ATCC 9150 / SARB42)</name>
    <dbReference type="NCBI Taxonomy" id="295319"/>
    <lineage>
        <taxon>Bacteria</taxon>
        <taxon>Pseudomonadati</taxon>
        <taxon>Pseudomonadota</taxon>
        <taxon>Gammaproteobacteria</taxon>
        <taxon>Enterobacterales</taxon>
        <taxon>Enterobacteriaceae</taxon>
        <taxon>Salmonella</taxon>
    </lineage>
</organism>
<sequence length="384" mass="41953">MAKHLFTSESVSEGHPDKIADQISDAVLDAILQQDPKARVACETYVKTGMVLVGGEITTSAWVDIEEITRNTVREIGYVHSDMGFDANSCAVLSAIGKQSPDINQGVDRADPLEQGAGDQGLMFGYATNETDVLMPAPITYAHRLVQRQAEVRKNGTLPWLRPDAKSQVTFQYDDGKIVGIDAVVLSTQHAEDIDQKSLQEAVMEEIIKPILPSEWLNTSTKFFINPTGRFVIGGPMGDCGLTGRKIIVDTYGGMARHGGGAFSGKDPSKVDRSAAYAARYVAKNIVAAGLADRCEIQVSYAIGVAEPTSIMVETFGTEKVPAEQLILLVREFFDLRPYGLIQMLDLLHPIYKETAAYGHFGRENFPWEKTDKAQLLRDAAGLK</sequence>
<reference key="1">
    <citation type="journal article" date="2004" name="Nat. Genet.">
        <title>Comparison of genome degradation in Paratyphi A and Typhi, human-restricted serovars of Salmonella enterica that cause typhoid.</title>
        <authorList>
            <person name="McClelland M."/>
            <person name="Sanderson K.E."/>
            <person name="Clifton S.W."/>
            <person name="Latreille P."/>
            <person name="Porwollik S."/>
            <person name="Sabo A."/>
            <person name="Meyer R."/>
            <person name="Bieri T."/>
            <person name="Ozersky P."/>
            <person name="McLellan M."/>
            <person name="Harkins C.R."/>
            <person name="Wang C."/>
            <person name="Nguyen C."/>
            <person name="Berghoff A."/>
            <person name="Elliott G."/>
            <person name="Kohlberg S."/>
            <person name="Strong C."/>
            <person name="Du F."/>
            <person name="Carter J."/>
            <person name="Kremizki C."/>
            <person name="Layman D."/>
            <person name="Leonard S."/>
            <person name="Sun H."/>
            <person name="Fulton L."/>
            <person name="Nash W."/>
            <person name="Miner T."/>
            <person name="Minx P."/>
            <person name="Delehaunty K."/>
            <person name="Fronick C."/>
            <person name="Magrini V."/>
            <person name="Nhan M."/>
            <person name="Warren W."/>
            <person name="Florea L."/>
            <person name="Spieth J."/>
            <person name="Wilson R.K."/>
        </authorList>
    </citation>
    <scope>NUCLEOTIDE SEQUENCE [LARGE SCALE GENOMIC DNA]</scope>
    <source>
        <strain>ATCC 9150 / SARB42</strain>
    </source>
</reference>
<feature type="chain" id="PRO_0000174580" description="S-adenosylmethionine synthase">
    <location>
        <begin position="1"/>
        <end position="384"/>
    </location>
</feature>
<feature type="region of interest" description="Flexible loop" evidence="1">
    <location>
        <begin position="99"/>
        <end position="109"/>
    </location>
</feature>
<feature type="binding site" description="in other chain" evidence="1">
    <location>
        <position position="15"/>
    </location>
    <ligand>
        <name>ATP</name>
        <dbReference type="ChEBI" id="CHEBI:30616"/>
        <note>ligand shared between two neighboring subunits</note>
    </ligand>
</feature>
<feature type="binding site" evidence="1">
    <location>
        <position position="17"/>
    </location>
    <ligand>
        <name>Mg(2+)</name>
        <dbReference type="ChEBI" id="CHEBI:18420"/>
    </ligand>
</feature>
<feature type="binding site" evidence="1">
    <location>
        <position position="43"/>
    </location>
    <ligand>
        <name>K(+)</name>
        <dbReference type="ChEBI" id="CHEBI:29103"/>
    </ligand>
</feature>
<feature type="binding site" description="in other chain" evidence="1">
    <location>
        <position position="56"/>
    </location>
    <ligand>
        <name>L-methionine</name>
        <dbReference type="ChEBI" id="CHEBI:57844"/>
        <note>ligand shared between two neighboring subunits</note>
    </ligand>
</feature>
<feature type="binding site" description="in other chain" evidence="1">
    <location>
        <position position="99"/>
    </location>
    <ligand>
        <name>L-methionine</name>
        <dbReference type="ChEBI" id="CHEBI:57844"/>
        <note>ligand shared between two neighboring subunits</note>
    </ligand>
</feature>
<feature type="binding site" description="in other chain" evidence="1">
    <location>
        <begin position="164"/>
        <end position="166"/>
    </location>
    <ligand>
        <name>ATP</name>
        <dbReference type="ChEBI" id="CHEBI:30616"/>
        <note>ligand shared between two neighboring subunits</note>
    </ligand>
</feature>
<feature type="binding site" description="in other chain" evidence="1">
    <location>
        <begin position="230"/>
        <end position="231"/>
    </location>
    <ligand>
        <name>ATP</name>
        <dbReference type="ChEBI" id="CHEBI:30616"/>
        <note>ligand shared between two neighboring subunits</note>
    </ligand>
</feature>
<feature type="binding site" evidence="1">
    <location>
        <position position="239"/>
    </location>
    <ligand>
        <name>ATP</name>
        <dbReference type="ChEBI" id="CHEBI:30616"/>
        <note>ligand shared between two neighboring subunits</note>
    </ligand>
</feature>
<feature type="binding site" evidence="1">
    <location>
        <position position="239"/>
    </location>
    <ligand>
        <name>L-methionine</name>
        <dbReference type="ChEBI" id="CHEBI:57844"/>
        <note>ligand shared between two neighboring subunits</note>
    </ligand>
</feature>
<feature type="binding site" description="in other chain" evidence="1">
    <location>
        <begin position="245"/>
        <end position="246"/>
    </location>
    <ligand>
        <name>ATP</name>
        <dbReference type="ChEBI" id="CHEBI:30616"/>
        <note>ligand shared between two neighboring subunits</note>
    </ligand>
</feature>
<feature type="binding site" evidence="1">
    <location>
        <position position="262"/>
    </location>
    <ligand>
        <name>ATP</name>
        <dbReference type="ChEBI" id="CHEBI:30616"/>
        <note>ligand shared between two neighboring subunits</note>
    </ligand>
</feature>
<feature type="binding site" evidence="1">
    <location>
        <position position="266"/>
    </location>
    <ligand>
        <name>ATP</name>
        <dbReference type="ChEBI" id="CHEBI:30616"/>
        <note>ligand shared between two neighboring subunits</note>
    </ligand>
</feature>
<feature type="binding site" description="in other chain" evidence="1">
    <location>
        <position position="270"/>
    </location>
    <ligand>
        <name>L-methionine</name>
        <dbReference type="ChEBI" id="CHEBI:57844"/>
        <note>ligand shared between two neighboring subunits</note>
    </ligand>
</feature>
<keyword id="KW-0067">ATP-binding</keyword>
<keyword id="KW-0963">Cytoplasm</keyword>
<keyword id="KW-0460">Magnesium</keyword>
<keyword id="KW-0479">Metal-binding</keyword>
<keyword id="KW-0547">Nucleotide-binding</keyword>
<keyword id="KW-0554">One-carbon metabolism</keyword>
<keyword id="KW-0630">Potassium</keyword>
<keyword id="KW-0808">Transferase</keyword>
<evidence type="ECO:0000255" key="1">
    <source>
        <dbReference type="HAMAP-Rule" id="MF_00086"/>
    </source>
</evidence>
<accession>Q5PJJ2</accession>